<proteinExistence type="evidence at protein level"/>
<reference key="1">
    <citation type="journal article" date="2003" name="EMBO J.">
        <title>A permease-like protein involved in ER to thylakoid lipid transfer in Arabidopsis.</title>
        <authorList>
            <person name="Xu C."/>
            <person name="Fan J."/>
            <person name="Riekhof W."/>
            <person name="Froehlich J.E."/>
            <person name="Benning C."/>
        </authorList>
    </citation>
    <scope>NUCLEOTIDE SEQUENCE [MRNA]</scope>
    <scope>FUNCTION</scope>
    <scope>TISSUE SPECIFICITY</scope>
    <scope>SUBCELLULAR LOCATION</scope>
    <scope>DISRUPTION PHENOTYPE</scope>
    <source>
        <strain>cv. Columbia</strain>
    </source>
</reference>
<reference key="2">
    <citation type="journal article" date="2000" name="Nature">
        <title>Sequence and analysis of chromosome 1 of the plant Arabidopsis thaliana.</title>
        <authorList>
            <person name="Theologis A."/>
            <person name="Ecker J.R."/>
            <person name="Palm C.J."/>
            <person name="Federspiel N.A."/>
            <person name="Kaul S."/>
            <person name="White O."/>
            <person name="Alonso J."/>
            <person name="Altafi H."/>
            <person name="Araujo R."/>
            <person name="Bowman C.L."/>
            <person name="Brooks S.Y."/>
            <person name="Buehler E."/>
            <person name="Chan A."/>
            <person name="Chao Q."/>
            <person name="Chen H."/>
            <person name="Cheuk R.F."/>
            <person name="Chin C.W."/>
            <person name="Chung M.K."/>
            <person name="Conn L."/>
            <person name="Conway A.B."/>
            <person name="Conway A.R."/>
            <person name="Creasy T.H."/>
            <person name="Dewar K."/>
            <person name="Dunn P."/>
            <person name="Etgu P."/>
            <person name="Feldblyum T.V."/>
            <person name="Feng J.-D."/>
            <person name="Fong B."/>
            <person name="Fujii C.Y."/>
            <person name="Gill J.E."/>
            <person name="Goldsmith A.D."/>
            <person name="Haas B."/>
            <person name="Hansen N.F."/>
            <person name="Hughes B."/>
            <person name="Huizar L."/>
            <person name="Hunter J.L."/>
            <person name="Jenkins J."/>
            <person name="Johnson-Hopson C."/>
            <person name="Khan S."/>
            <person name="Khaykin E."/>
            <person name="Kim C.J."/>
            <person name="Koo H.L."/>
            <person name="Kremenetskaia I."/>
            <person name="Kurtz D.B."/>
            <person name="Kwan A."/>
            <person name="Lam B."/>
            <person name="Langin-Hooper S."/>
            <person name="Lee A."/>
            <person name="Lee J.M."/>
            <person name="Lenz C.A."/>
            <person name="Li J.H."/>
            <person name="Li Y.-P."/>
            <person name="Lin X."/>
            <person name="Liu S.X."/>
            <person name="Liu Z.A."/>
            <person name="Luros J.S."/>
            <person name="Maiti R."/>
            <person name="Marziali A."/>
            <person name="Militscher J."/>
            <person name="Miranda M."/>
            <person name="Nguyen M."/>
            <person name="Nierman W.C."/>
            <person name="Osborne B.I."/>
            <person name="Pai G."/>
            <person name="Peterson J."/>
            <person name="Pham P.K."/>
            <person name="Rizzo M."/>
            <person name="Rooney T."/>
            <person name="Rowley D."/>
            <person name="Sakano H."/>
            <person name="Salzberg S.L."/>
            <person name="Schwartz J.R."/>
            <person name="Shinn P."/>
            <person name="Southwick A.M."/>
            <person name="Sun H."/>
            <person name="Tallon L.J."/>
            <person name="Tambunga G."/>
            <person name="Toriumi M.J."/>
            <person name="Town C.D."/>
            <person name="Utterback T."/>
            <person name="Van Aken S."/>
            <person name="Vaysberg M."/>
            <person name="Vysotskaia V.S."/>
            <person name="Walker M."/>
            <person name="Wu D."/>
            <person name="Yu G."/>
            <person name="Fraser C.M."/>
            <person name="Venter J.C."/>
            <person name="Davis R.W."/>
        </authorList>
    </citation>
    <scope>NUCLEOTIDE SEQUENCE [LARGE SCALE GENOMIC DNA]</scope>
    <source>
        <strain>cv. Columbia</strain>
    </source>
</reference>
<reference key="3">
    <citation type="journal article" date="2017" name="Plant J.">
        <title>Araport11: a complete reannotation of the Arabidopsis thaliana reference genome.</title>
        <authorList>
            <person name="Cheng C.Y."/>
            <person name="Krishnakumar V."/>
            <person name="Chan A.P."/>
            <person name="Thibaud-Nissen F."/>
            <person name="Schobel S."/>
            <person name="Town C.D."/>
        </authorList>
    </citation>
    <scope>GENOME REANNOTATION</scope>
    <source>
        <strain>cv. Columbia</strain>
    </source>
</reference>
<reference key="4">
    <citation type="journal article" date="2003" name="Science">
        <title>Empirical analysis of transcriptional activity in the Arabidopsis genome.</title>
        <authorList>
            <person name="Yamada K."/>
            <person name="Lim J."/>
            <person name="Dale J.M."/>
            <person name="Chen H."/>
            <person name="Shinn P."/>
            <person name="Palm C.J."/>
            <person name="Southwick A.M."/>
            <person name="Wu H.C."/>
            <person name="Kim C.J."/>
            <person name="Nguyen M."/>
            <person name="Pham P.K."/>
            <person name="Cheuk R.F."/>
            <person name="Karlin-Newmann G."/>
            <person name="Liu S.X."/>
            <person name="Lam B."/>
            <person name="Sakano H."/>
            <person name="Wu T."/>
            <person name="Yu G."/>
            <person name="Miranda M."/>
            <person name="Quach H.L."/>
            <person name="Tripp M."/>
            <person name="Chang C.H."/>
            <person name="Lee J.M."/>
            <person name="Toriumi M.J."/>
            <person name="Chan M.M."/>
            <person name="Tang C.C."/>
            <person name="Onodera C.S."/>
            <person name="Deng J.M."/>
            <person name="Akiyama K."/>
            <person name="Ansari Y."/>
            <person name="Arakawa T."/>
            <person name="Banh J."/>
            <person name="Banno F."/>
            <person name="Bowser L."/>
            <person name="Brooks S.Y."/>
            <person name="Carninci P."/>
            <person name="Chao Q."/>
            <person name="Choy N."/>
            <person name="Enju A."/>
            <person name="Goldsmith A.D."/>
            <person name="Gurjal M."/>
            <person name="Hansen N.F."/>
            <person name="Hayashizaki Y."/>
            <person name="Johnson-Hopson C."/>
            <person name="Hsuan V.W."/>
            <person name="Iida K."/>
            <person name="Karnes M."/>
            <person name="Khan S."/>
            <person name="Koesema E."/>
            <person name="Ishida J."/>
            <person name="Jiang P.X."/>
            <person name="Jones T."/>
            <person name="Kawai J."/>
            <person name="Kamiya A."/>
            <person name="Meyers C."/>
            <person name="Nakajima M."/>
            <person name="Narusaka M."/>
            <person name="Seki M."/>
            <person name="Sakurai T."/>
            <person name="Satou M."/>
            <person name="Tamse R."/>
            <person name="Vaysberg M."/>
            <person name="Wallender E.K."/>
            <person name="Wong C."/>
            <person name="Yamamura Y."/>
            <person name="Yuan S."/>
            <person name="Shinozaki K."/>
            <person name="Davis R.W."/>
            <person name="Theologis A."/>
            <person name="Ecker J.R."/>
        </authorList>
    </citation>
    <scope>NUCLEOTIDE SEQUENCE [LARGE SCALE MRNA]</scope>
    <source>
        <strain>cv. Columbia</strain>
    </source>
</reference>
<reference key="5">
    <citation type="journal article" date="2009" name="DNA Res.">
        <title>Analysis of multiple occurrences of alternative splicing events in Arabidopsis thaliana using novel sequenced full-length cDNAs.</title>
        <authorList>
            <person name="Iida K."/>
            <person name="Fukami-Kobayashi K."/>
            <person name="Toyoda A."/>
            <person name="Sakaki Y."/>
            <person name="Kobayashi M."/>
            <person name="Seki M."/>
            <person name="Shinozaki K."/>
        </authorList>
    </citation>
    <scope>NUCLEOTIDE SEQUENCE [LARGE SCALE MRNA] OF 108-350</scope>
    <source>
        <strain>cv. Columbia</strain>
    </source>
</reference>
<reference key="6">
    <citation type="journal article" date="2005" name="Plant Cell">
        <title>Mutation of the TGD1 chloroplast envelope protein affects phosphatidate metabolism in Arabidopsis.</title>
        <authorList>
            <person name="Xu C."/>
            <person name="Fan J."/>
            <person name="Froehlich J.E."/>
            <person name="Awai K."/>
            <person name="Benning C."/>
        </authorList>
    </citation>
    <scope>FUNCTION</scope>
    <scope>SUBCELLULAR LOCATION</scope>
    <scope>TOPOLOGY</scope>
    <scope>DISRUPTION PHENOTYPE</scope>
</reference>
<reference key="7">
    <citation type="journal article" date="2008" name="Plant Cell">
        <title>Lipid trafficking between the endoplasmic reticulum and the plastid in Arabidopsis requires the extraplastidic TGD4 protein.</title>
        <authorList>
            <person name="Xu C."/>
            <person name="Fan J."/>
            <person name="Cornish A.J."/>
            <person name="Benning C."/>
        </authorList>
    </citation>
    <scope>FUNCTION</scope>
</reference>
<reference key="8">
    <citation type="journal article" date="2008" name="Trends Plant Sci.">
        <title>Plant ABC proteins - a unified nomenclature and updated inventory.</title>
        <authorList>
            <person name="Verrier P.J."/>
            <person name="Bird D."/>
            <person name="Burla B."/>
            <person name="Dassa E."/>
            <person name="Forestier C."/>
            <person name="Geisler M."/>
            <person name="Klein M."/>
            <person name="Kolukisaoglu H.U."/>
            <person name="Lee Y."/>
            <person name="Martinoia E."/>
            <person name="Murphy A."/>
            <person name="Rea P.A."/>
            <person name="Samuels L."/>
            <person name="Schulz B."/>
            <person name="Spalding E.J."/>
            <person name="Yazaki K."/>
            <person name="Theodoulou F.L."/>
        </authorList>
    </citation>
    <scope>GENE FAMILY</scope>
    <scope>NOMENCLATURE</scope>
</reference>
<reference key="9">
    <citation type="journal article" date="2010" name="Plant Cell Physiol.">
        <title>Lipid transport mediated by Arabidopsis TGD proteins is unidirectional from the endoplasmic reticulum to the plastid.</title>
        <authorList>
            <person name="Xu C."/>
            <person name="Moellering E.R."/>
            <person name="Muthan B."/>
            <person name="Fan J."/>
            <person name="Benning C."/>
        </authorList>
    </citation>
    <scope>FUNCTION</scope>
</reference>
<reference key="10">
    <citation type="journal article" date="2012" name="J. Biol. Chem.">
        <title>TGD1, -2, and -3 proteins involved in lipid trafficking form ATP-binding cassette (ABC) transporter with multiple substrate-binding proteins.</title>
        <authorList>
            <person name="Roston R.L."/>
            <person name="Gao J."/>
            <person name="Murcha M.W."/>
            <person name="Whelan J."/>
            <person name="Benning C."/>
        </authorList>
    </citation>
    <scope>IDENTIFICATION IN THE TGD COMPLEX</scope>
    <scope>INTERACTION WITH TGD1 AND TGD3</scope>
</reference>
<reference key="11">
    <citation type="journal article" date="2015" name="Plant Cell">
        <title>Arabidopsis TRIGALACTOSYLDIACYLGLYCEROL5 interacts with TGD1, TGD2, and TGD4 to facilitate lipid transfer from the endoplasmic reticulum to plastids.</title>
        <authorList>
            <person name="Fan J."/>
            <person name="Zhai Z."/>
            <person name="Yan C."/>
            <person name="Xu C."/>
        </authorList>
    </citation>
    <scope>INTERACTION WITH TGD5</scope>
</reference>
<feature type="transit peptide" description="Chloroplast">
    <location>
        <begin position="1"/>
        <end status="unknown"/>
    </location>
</feature>
<feature type="chain" id="PRO_0000379144" description="Protein TRIGALACTOSYLDIACYLGLYCEROL 1, chloroplastic">
    <location>
        <begin status="unknown"/>
        <end position="350"/>
    </location>
</feature>
<feature type="topological domain" description="Chloroplast intermembrane" evidence="12">
    <location>
        <begin status="unknown"/>
        <end position="97"/>
    </location>
</feature>
<feature type="transmembrane region" description="Helical" evidence="1">
    <location>
        <begin position="98"/>
        <end position="117"/>
    </location>
</feature>
<feature type="topological domain" description="Stromal" evidence="12">
    <location>
        <begin position="118"/>
        <end position="136"/>
    </location>
</feature>
<feature type="transmembrane region" description="Helical" evidence="1">
    <location>
        <begin position="137"/>
        <end position="157"/>
    </location>
</feature>
<feature type="topological domain" description="Chloroplast intermembrane" evidence="12">
    <location>
        <begin position="158"/>
        <end position="168"/>
    </location>
</feature>
<feature type="transmembrane region" description="Helical" evidence="1">
    <location>
        <begin position="169"/>
        <end position="189"/>
    </location>
</feature>
<feature type="topological domain" description="Stromal" evidence="12">
    <location>
        <begin position="190"/>
        <end position="229"/>
    </location>
</feature>
<feature type="transmembrane region" description="Helical" evidence="1">
    <location>
        <begin position="230"/>
        <end position="250"/>
    </location>
</feature>
<feature type="topological domain" description="Chloroplast intermembrane" evidence="12">
    <location>
        <begin position="251"/>
        <end position="288"/>
    </location>
</feature>
<feature type="transmembrane region" description="Helical" evidence="1">
    <location>
        <begin position="289"/>
        <end position="309"/>
    </location>
</feature>
<feature type="topological domain" description="Stromal" evidence="12">
    <location>
        <begin position="310"/>
        <end position="318"/>
    </location>
</feature>
<feature type="transmembrane region" description="Helical" evidence="1">
    <location>
        <begin position="319"/>
        <end position="339"/>
    </location>
</feature>
<feature type="topological domain" description="Chloroplast intermembrane" evidence="12">
    <location>
        <begin position="340"/>
        <end position="350"/>
    </location>
</feature>
<feature type="region of interest" description="Disordered" evidence="2">
    <location>
        <begin position="67"/>
        <end position="86"/>
    </location>
</feature>
<organism>
    <name type="scientific">Arabidopsis thaliana</name>
    <name type="common">Mouse-ear cress</name>
    <dbReference type="NCBI Taxonomy" id="3702"/>
    <lineage>
        <taxon>Eukaryota</taxon>
        <taxon>Viridiplantae</taxon>
        <taxon>Streptophyta</taxon>
        <taxon>Embryophyta</taxon>
        <taxon>Tracheophyta</taxon>
        <taxon>Spermatophyta</taxon>
        <taxon>Magnoliopsida</taxon>
        <taxon>eudicotyledons</taxon>
        <taxon>Gunneridae</taxon>
        <taxon>Pentapetalae</taxon>
        <taxon>rosids</taxon>
        <taxon>malvids</taxon>
        <taxon>Brassicales</taxon>
        <taxon>Brassicaceae</taxon>
        <taxon>Camelineae</taxon>
        <taxon>Arabidopsis</taxon>
    </lineage>
</organism>
<evidence type="ECO:0000255" key="1"/>
<evidence type="ECO:0000256" key="2">
    <source>
        <dbReference type="SAM" id="MobiDB-lite"/>
    </source>
</evidence>
<evidence type="ECO:0000269" key="3">
    <source>
    </source>
</evidence>
<evidence type="ECO:0000269" key="4">
    <source>
    </source>
</evidence>
<evidence type="ECO:0000269" key="5">
    <source>
    </source>
</evidence>
<evidence type="ECO:0000269" key="6">
    <source>
    </source>
</evidence>
<evidence type="ECO:0000269" key="7">
    <source>
    </source>
</evidence>
<evidence type="ECO:0000269" key="8">
    <source>
    </source>
</evidence>
<evidence type="ECO:0000303" key="9">
    <source>
    </source>
</evidence>
<evidence type="ECO:0000303" key="10">
    <source>
    </source>
</evidence>
<evidence type="ECO:0000305" key="11"/>
<evidence type="ECO:0000305" key="12">
    <source>
    </source>
</evidence>
<evidence type="ECO:0000305" key="13">
    <source>
    </source>
</evidence>
<evidence type="ECO:0000312" key="14">
    <source>
        <dbReference type="Araport" id="AT1G19800"/>
    </source>
</evidence>
<evidence type="ECO:0000312" key="15">
    <source>
        <dbReference type="EMBL" id="AAG12551.1"/>
    </source>
</evidence>
<accession>Q8L4R0</accession>
<accession>Q9FXH8</accession>
<name>TGD1_ARATH</name>
<keyword id="KW-0150">Chloroplast</keyword>
<keyword id="KW-0445">Lipid transport</keyword>
<keyword id="KW-0472">Membrane</keyword>
<keyword id="KW-0934">Plastid</keyword>
<keyword id="KW-1001">Plastid inner membrane</keyword>
<keyword id="KW-1185">Reference proteome</keyword>
<keyword id="KW-0809">Transit peptide</keyword>
<keyword id="KW-0812">Transmembrane</keyword>
<keyword id="KW-1133">Transmembrane helix</keyword>
<keyword id="KW-0813">Transport</keyword>
<gene>
    <name evidence="9" type="primary">TGD1</name>
    <name evidence="10" type="synonym">ABCI14</name>
    <name evidence="14" type="ordered locus">At1g19800</name>
    <name evidence="15" type="ORF">F14P1.27</name>
</gene>
<comment type="function">
    <text evidence="3 4 5 6">Required during embryogenesis. Permease involved in lipid transfer from the endoplasmic reticulum (ER) to plastids, and necessary for thylakoids formation.</text>
</comment>
<comment type="subunit">
    <text evidence="7 8">Permease subunit of the TGD complex, a lipid translocator at the inner chloroplast envelope membrane made of TGD1, TGD2 and TGD3 (PubMed:22544736). Interacts with TGD2 and TGD3 with an overall subunit stoichiometry of 2 TGD1, 2 TGD3 and 8 to 12 TGD2 (PubMed:22544736). Interacts with TGD5 (PubMed:26410300).</text>
</comment>
<comment type="subcellular location">
    <subcellularLocation>
        <location evidence="3 4">Plastid</location>
        <location evidence="3 4">Chloroplast inner membrane</location>
        <topology evidence="1">Multi-pass membrane protein</topology>
    </subcellularLocation>
</comment>
<comment type="tissue specificity">
    <text evidence="3">High levels in green tissues, but low levels in nongreen tissues such as roots.</text>
</comment>
<comment type="disruption phenotype">
    <text evidence="3 4">Disruption in the biosynthesis of ER-derived thylakoid lipids, and accumulation of oligogalactolipids, triacylglycerols (TAGs), and phosphatidates (PAs). Reduced growth with stout leaves and siliques. Impaired embryogenesis.</text>
</comment>
<comment type="similarity">
    <text evidence="11">Belongs to the MlaE permease family.</text>
</comment>
<comment type="caution">
    <text evidence="13">Was originally (PubMed:18299247) thought to belong to the ABC transporter family. Lacks the conserved ABC domain, which is one of the features of the ABC transporter family.</text>
</comment>
<comment type="sequence caution" evidence="11">
    <conflict type="erroneous gene model prediction">
        <sequence resource="EMBL-CDS" id="AAG12551"/>
    </conflict>
</comment>
<protein>
    <recommendedName>
        <fullName evidence="9">Protein TRIGALACTOSYLDIACYLGLYCEROL 1, chloroplastic</fullName>
    </recommendedName>
    <alternativeName>
        <fullName evidence="10">ABC transporter I family member 14</fullName>
        <shortName evidence="10">ABC transporter ABCI.14</shortName>
        <shortName evidence="10">AtABCI14</shortName>
    </alternativeName>
</protein>
<sequence>MMQTCCIHQSFCFPHRVFPRFDASIGIKPPKLCQVGFIGKTQSYGISSPIRQRRLYVNLNANDGHPSMSMLEEETSTENNAPSQEAELPFSKWSPSKYIWRGLSVPIIAGQVVLRILKGKIHWRNTLQQLERTGPKSLGVCLLTSTFVGMAFTIQFVREFTRLGLNRSIGGVLALAFSRELSPVITSIVVAGRMGSAFAAELGTMQVSEQTDTLRVLGADPIDYLITPRVIASCLALPFLTLMCFTVGMASSALLSDAVYGISINIIMDSAHRALRPWDIVSAMIKSQVFGAIISVISCSWGVTTTGGAKGVGESTTSAVVMSLVGIFIADFVLSSFFFQGAGDSLKNCV</sequence>
<dbReference type="EMBL" id="AY568410">
    <property type="protein sequence ID" value="AAS75319.1"/>
    <property type="molecule type" value="mRNA"/>
</dbReference>
<dbReference type="EMBL" id="AC007797">
    <property type="protein sequence ID" value="AAG12551.1"/>
    <property type="status" value="ALT_SEQ"/>
    <property type="molecule type" value="Genomic_DNA"/>
</dbReference>
<dbReference type="EMBL" id="CP002684">
    <property type="protein sequence ID" value="AEE29899.1"/>
    <property type="molecule type" value="Genomic_DNA"/>
</dbReference>
<dbReference type="EMBL" id="CP002684">
    <property type="protein sequence ID" value="AEE29900.1"/>
    <property type="molecule type" value="Genomic_DNA"/>
</dbReference>
<dbReference type="EMBL" id="CP002684">
    <property type="protein sequence ID" value="AEE29901.1"/>
    <property type="molecule type" value="Genomic_DNA"/>
</dbReference>
<dbReference type="EMBL" id="CP002684">
    <property type="protein sequence ID" value="ANM60434.1"/>
    <property type="molecule type" value="Genomic_DNA"/>
</dbReference>
<dbReference type="EMBL" id="CP002684">
    <property type="protein sequence ID" value="ANM60435.1"/>
    <property type="molecule type" value="Genomic_DNA"/>
</dbReference>
<dbReference type="EMBL" id="CP002684">
    <property type="protein sequence ID" value="ANM60436.1"/>
    <property type="molecule type" value="Genomic_DNA"/>
</dbReference>
<dbReference type="EMBL" id="AY096644">
    <property type="protein sequence ID" value="AAM20141.1"/>
    <property type="molecule type" value="mRNA"/>
</dbReference>
<dbReference type="EMBL" id="AY114021">
    <property type="protein sequence ID" value="AAM45069.1"/>
    <property type="molecule type" value="mRNA"/>
</dbReference>
<dbReference type="EMBL" id="AK317390">
    <property type="protein sequence ID" value="BAH20061.1"/>
    <property type="molecule type" value="mRNA"/>
</dbReference>
<dbReference type="PIR" id="B86331">
    <property type="entry name" value="B86331"/>
</dbReference>
<dbReference type="RefSeq" id="NP_001322720.1">
    <property type="nucleotide sequence ID" value="NM_001332408.1"/>
</dbReference>
<dbReference type="RefSeq" id="NP_001322721.1">
    <property type="nucleotide sequence ID" value="NM_001332409.1"/>
</dbReference>
<dbReference type="RefSeq" id="NP_001322722.1">
    <property type="nucleotide sequence ID" value="NM_001332407.1"/>
</dbReference>
<dbReference type="RefSeq" id="NP_173410.1">
    <property type="nucleotide sequence ID" value="NM_101836.4"/>
</dbReference>
<dbReference type="RefSeq" id="NP_973868.1">
    <property type="nucleotide sequence ID" value="NM_202139.3"/>
</dbReference>
<dbReference type="RefSeq" id="NP_973869.1">
    <property type="nucleotide sequence ID" value="NM_202140.2"/>
</dbReference>
<dbReference type="SMR" id="Q8L4R0"/>
<dbReference type="BioGRID" id="23807">
    <property type="interactions" value="24"/>
</dbReference>
<dbReference type="FunCoup" id="Q8L4R0">
    <property type="interactions" value="297"/>
</dbReference>
<dbReference type="IntAct" id="Q8L4R0">
    <property type="interactions" value="22"/>
</dbReference>
<dbReference type="STRING" id="3702.Q8L4R0"/>
<dbReference type="TCDB" id="3.A.1.27.2">
    <property type="family name" value="the atp-binding cassette (abc) superfamily"/>
</dbReference>
<dbReference type="PaxDb" id="3702-AT1G19800.2"/>
<dbReference type="ProteomicsDB" id="246471"/>
<dbReference type="EnsemblPlants" id="AT1G19800.1">
    <property type="protein sequence ID" value="AT1G19800.1"/>
    <property type="gene ID" value="AT1G19800"/>
</dbReference>
<dbReference type="EnsemblPlants" id="AT1G19800.2">
    <property type="protein sequence ID" value="AT1G19800.2"/>
    <property type="gene ID" value="AT1G19800"/>
</dbReference>
<dbReference type="EnsemblPlants" id="AT1G19800.3">
    <property type="protein sequence ID" value="AT1G19800.3"/>
    <property type="gene ID" value="AT1G19800"/>
</dbReference>
<dbReference type="EnsemblPlants" id="AT1G19800.4">
    <property type="protein sequence ID" value="AT1G19800.4"/>
    <property type="gene ID" value="AT1G19800"/>
</dbReference>
<dbReference type="EnsemblPlants" id="AT1G19800.5">
    <property type="protein sequence ID" value="AT1G19800.5"/>
    <property type="gene ID" value="AT1G19800"/>
</dbReference>
<dbReference type="EnsemblPlants" id="AT1G19800.6">
    <property type="protein sequence ID" value="AT1G19800.6"/>
    <property type="gene ID" value="AT1G19800"/>
</dbReference>
<dbReference type="GeneID" id="838568"/>
<dbReference type="Gramene" id="AT1G19800.1">
    <property type="protein sequence ID" value="AT1G19800.1"/>
    <property type="gene ID" value="AT1G19800"/>
</dbReference>
<dbReference type="Gramene" id="AT1G19800.2">
    <property type="protein sequence ID" value="AT1G19800.2"/>
    <property type="gene ID" value="AT1G19800"/>
</dbReference>
<dbReference type="Gramene" id="AT1G19800.3">
    <property type="protein sequence ID" value="AT1G19800.3"/>
    <property type="gene ID" value="AT1G19800"/>
</dbReference>
<dbReference type="Gramene" id="AT1G19800.4">
    <property type="protein sequence ID" value="AT1G19800.4"/>
    <property type="gene ID" value="AT1G19800"/>
</dbReference>
<dbReference type="Gramene" id="AT1G19800.5">
    <property type="protein sequence ID" value="AT1G19800.5"/>
    <property type="gene ID" value="AT1G19800"/>
</dbReference>
<dbReference type="Gramene" id="AT1G19800.6">
    <property type="protein sequence ID" value="AT1G19800.6"/>
    <property type="gene ID" value="AT1G19800"/>
</dbReference>
<dbReference type="KEGG" id="ath:AT1G19800"/>
<dbReference type="Araport" id="AT1G19800"/>
<dbReference type="TAIR" id="AT1G19800">
    <property type="gene designation" value="ABCI14"/>
</dbReference>
<dbReference type="eggNOG" id="ENOG502QPRJ">
    <property type="taxonomic scope" value="Eukaryota"/>
</dbReference>
<dbReference type="HOGENOM" id="CLU_045686_1_0_1"/>
<dbReference type="InParanoid" id="Q8L4R0"/>
<dbReference type="OMA" id="RFQWQEF"/>
<dbReference type="OrthoDB" id="6500128at2759"/>
<dbReference type="PhylomeDB" id="Q8L4R0"/>
<dbReference type="PRO" id="PR:Q8L4R0"/>
<dbReference type="Proteomes" id="UP000006548">
    <property type="component" value="Chromosome 1"/>
</dbReference>
<dbReference type="ExpressionAtlas" id="Q8L4R0">
    <property type="expression patterns" value="baseline and differential"/>
</dbReference>
<dbReference type="GO" id="GO:0043190">
    <property type="term" value="C:ATP-binding cassette (ABC) transporter complex"/>
    <property type="evidence" value="ECO:0007669"/>
    <property type="project" value="InterPro"/>
</dbReference>
<dbReference type="GO" id="GO:0009507">
    <property type="term" value="C:chloroplast"/>
    <property type="evidence" value="ECO:0007005"/>
    <property type="project" value="TAIR"/>
</dbReference>
<dbReference type="GO" id="GO:0009941">
    <property type="term" value="C:chloroplast envelope"/>
    <property type="evidence" value="ECO:0000314"/>
    <property type="project" value="TAIR"/>
</dbReference>
<dbReference type="GO" id="GO:0009706">
    <property type="term" value="C:chloroplast inner membrane"/>
    <property type="evidence" value="ECO:0000304"/>
    <property type="project" value="TAIR"/>
</dbReference>
<dbReference type="GO" id="GO:0009707">
    <property type="term" value="C:chloroplast outer membrane"/>
    <property type="evidence" value="ECO:0000314"/>
    <property type="project" value="TAIR"/>
</dbReference>
<dbReference type="GO" id="GO:0005634">
    <property type="term" value="C:nucleus"/>
    <property type="evidence" value="ECO:0007005"/>
    <property type="project" value="TAIR"/>
</dbReference>
<dbReference type="GO" id="GO:0005319">
    <property type="term" value="F:lipid transporter activity"/>
    <property type="evidence" value="ECO:0000315"/>
    <property type="project" value="TAIR"/>
</dbReference>
<dbReference type="GO" id="GO:0006869">
    <property type="term" value="P:lipid transport"/>
    <property type="evidence" value="ECO:0000315"/>
    <property type="project" value="TAIR"/>
</dbReference>
<dbReference type="InterPro" id="IPR003453">
    <property type="entry name" value="ABC_MlaE_roteobac"/>
</dbReference>
<dbReference type="InterPro" id="IPR030802">
    <property type="entry name" value="Permease_MalE"/>
</dbReference>
<dbReference type="NCBIfam" id="TIGR00056">
    <property type="entry name" value="MlaE family lipid ABC transporter permease subunit"/>
    <property type="match status" value="1"/>
</dbReference>
<dbReference type="PANTHER" id="PTHR30188">
    <property type="entry name" value="ABC TRANSPORTER PERMEASE PROTEIN-RELATED"/>
    <property type="match status" value="1"/>
</dbReference>
<dbReference type="PANTHER" id="PTHR30188:SF4">
    <property type="entry name" value="PROTEIN TRIGALACTOSYLDIACYLGLYCEROL 1, CHLOROPLASTIC"/>
    <property type="match status" value="1"/>
</dbReference>
<dbReference type="Pfam" id="PF02405">
    <property type="entry name" value="MlaE"/>
    <property type="match status" value="1"/>
</dbReference>